<reference key="1">
    <citation type="journal article" date="2001" name="Nature">
        <title>Complete genome sequence of Salmonella enterica serovar Typhimurium LT2.</title>
        <authorList>
            <person name="McClelland M."/>
            <person name="Sanderson K.E."/>
            <person name="Spieth J."/>
            <person name="Clifton S.W."/>
            <person name="Latreille P."/>
            <person name="Courtney L."/>
            <person name="Porwollik S."/>
            <person name="Ali J."/>
            <person name="Dante M."/>
            <person name="Du F."/>
            <person name="Hou S."/>
            <person name="Layman D."/>
            <person name="Leonard S."/>
            <person name="Nguyen C."/>
            <person name="Scott K."/>
            <person name="Holmes A."/>
            <person name="Grewal N."/>
            <person name="Mulvaney E."/>
            <person name="Ryan E."/>
            <person name="Sun H."/>
            <person name="Florea L."/>
            <person name="Miller W."/>
            <person name="Stoneking T."/>
            <person name="Nhan M."/>
            <person name="Waterston R."/>
            <person name="Wilson R.K."/>
        </authorList>
    </citation>
    <scope>NUCLEOTIDE SEQUENCE [LARGE SCALE GENOMIC DNA]</scope>
    <source>
        <strain>LT2 / SGSC1412 / ATCC 700720</strain>
    </source>
</reference>
<reference key="2">
    <citation type="journal article" date="2007" name="Protein Sci.">
        <title>Functional analysis of the GTPases EngA and YhbZ encoded by Salmonella typhimurium.</title>
        <authorList>
            <person name="Lamb H.K."/>
            <person name="Thompson P."/>
            <person name="Elliott C."/>
            <person name="Charles I.G."/>
            <person name="Richards J."/>
            <person name="Lockyer M."/>
            <person name="Watkins N."/>
            <person name="Nichols C."/>
            <person name="Stammers D.K."/>
            <person name="Bagshaw C.R."/>
            <person name="Cooper A."/>
            <person name="Hawkins A.R."/>
        </authorList>
    </citation>
    <scope>IDENTIFICATION BY MASS SPECTROMETRY</scope>
    <scope>INTERACTION WITH OBG/YHBZ</scope>
    <source>
        <strain>FIRN / SL3261</strain>
    </source>
</reference>
<dbReference type="EMBL" id="AE006468">
    <property type="protein sequence ID" value="AAL22213.1"/>
    <property type="molecule type" value="Genomic_DNA"/>
</dbReference>
<dbReference type="RefSeq" id="NP_462254.1">
    <property type="nucleotide sequence ID" value="NC_003197.2"/>
</dbReference>
<dbReference type="RefSeq" id="WP_000829815.1">
    <property type="nucleotide sequence ID" value="NC_003197.2"/>
</dbReference>
<dbReference type="SMR" id="P66643"/>
<dbReference type="STRING" id="99287.STM3344"/>
<dbReference type="PaxDb" id="99287-STM3344"/>
<dbReference type="GeneID" id="1254867"/>
<dbReference type="GeneID" id="97393262"/>
<dbReference type="KEGG" id="stm:STM3344"/>
<dbReference type="PATRIC" id="fig|99287.12.peg.3545"/>
<dbReference type="HOGENOM" id="CLU_046483_2_1_6"/>
<dbReference type="OMA" id="KFQFSKR"/>
<dbReference type="PhylomeDB" id="P66643"/>
<dbReference type="BioCyc" id="SENT99287:STM3344-MONOMER"/>
<dbReference type="PRO" id="PR:P66643"/>
<dbReference type="Proteomes" id="UP000001014">
    <property type="component" value="Chromosome"/>
</dbReference>
<dbReference type="GO" id="GO:0022627">
    <property type="term" value="C:cytosolic small ribosomal subunit"/>
    <property type="evidence" value="ECO:0000318"/>
    <property type="project" value="GO_Central"/>
</dbReference>
<dbReference type="GO" id="GO:0003723">
    <property type="term" value="F:RNA binding"/>
    <property type="evidence" value="ECO:0000318"/>
    <property type="project" value="GO_Central"/>
</dbReference>
<dbReference type="GO" id="GO:0003735">
    <property type="term" value="F:structural constituent of ribosome"/>
    <property type="evidence" value="ECO:0000318"/>
    <property type="project" value="GO_Central"/>
</dbReference>
<dbReference type="GO" id="GO:0006412">
    <property type="term" value="P:translation"/>
    <property type="evidence" value="ECO:0007669"/>
    <property type="project" value="UniProtKB-UniRule"/>
</dbReference>
<dbReference type="FunFam" id="3.30.230.10:FF:000001">
    <property type="entry name" value="30S ribosomal protein S9"/>
    <property type="match status" value="1"/>
</dbReference>
<dbReference type="Gene3D" id="3.30.230.10">
    <property type="match status" value="1"/>
</dbReference>
<dbReference type="HAMAP" id="MF_00532_B">
    <property type="entry name" value="Ribosomal_uS9_B"/>
    <property type="match status" value="1"/>
</dbReference>
<dbReference type="InterPro" id="IPR020568">
    <property type="entry name" value="Ribosomal_Su5_D2-typ_SF"/>
</dbReference>
<dbReference type="InterPro" id="IPR000754">
    <property type="entry name" value="Ribosomal_uS9"/>
</dbReference>
<dbReference type="InterPro" id="IPR023035">
    <property type="entry name" value="Ribosomal_uS9_bac/plastid"/>
</dbReference>
<dbReference type="InterPro" id="IPR020574">
    <property type="entry name" value="Ribosomal_uS9_CS"/>
</dbReference>
<dbReference type="InterPro" id="IPR014721">
    <property type="entry name" value="Ribsml_uS5_D2-typ_fold_subgr"/>
</dbReference>
<dbReference type="NCBIfam" id="NF001099">
    <property type="entry name" value="PRK00132.1"/>
    <property type="match status" value="1"/>
</dbReference>
<dbReference type="PANTHER" id="PTHR21569">
    <property type="entry name" value="RIBOSOMAL PROTEIN S9"/>
    <property type="match status" value="1"/>
</dbReference>
<dbReference type="PANTHER" id="PTHR21569:SF1">
    <property type="entry name" value="SMALL RIBOSOMAL SUBUNIT PROTEIN US9M"/>
    <property type="match status" value="1"/>
</dbReference>
<dbReference type="Pfam" id="PF00380">
    <property type="entry name" value="Ribosomal_S9"/>
    <property type="match status" value="1"/>
</dbReference>
<dbReference type="SUPFAM" id="SSF54211">
    <property type="entry name" value="Ribosomal protein S5 domain 2-like"/>
    <property type="match status" value="1"/>
</dbReference>
<dbReference type="PROSITE" id="PS00360">
    <property type="entry name" value="RIBOSOMAL_S9"/>
    <property type="match status" value="1"/>
</dbReference>
<proteinExistence type="evidence at protein level"/>
<protein>
    <recommendedName>
        <fullName evidence="2">Small ribosomal subunit protein uS9</fullName>
    </recommendedName>
    <alternativeName>
        <fullName evidence="3">30S ribosomal protein S9</fullName>
    </alternativeName>
</protein>
<accession>P66643</accession>
<accession>Q8XFX5</accession>
<sequence length="130" mass="14826">MAENQYYGTGRRKSSAARVFIKPGNGKIVINQRSLEQYFGRETARMVVRQPLELVDMVEKLDLYITVKGGGISGQAGAIRHGITRALMEYDESLRGELRKAGFVTRDARQVERKKVGLRKARRRPQFSKR</sequence>
<feature type="initiator methionine" description="Removed" evidence="1">
    <location>
        <position position="1"/>
    </location>
</feature>
<feature type="chain" id="PRO_0000111400" description="Small ribosomal subunit protein uS9">
    <location>
        <begin position="2"/>
        <end position="130"/>
    </location>
</feature>
<gene>
    <name evidence="2" type="primary">rpsI</name>
    <name type="ordered locus">STM3344</name>
</gene>
<comment type="subunit">
    <text>Binds ObgE/YhbZ (AC Q8ZLS5).</text>
</comment>
<comment type="similarity">
    <text evidence="2">Belongs to the universal ribosomal protein uS9 family.</text>
</comment>
<name>RS9_SALTY</name>
<organism>
    <name type="scientific">Salmonella typhimurium (strain LT2 / SGSC1412 / ATCC 700720)</name>
    <dbReference type="NCBI Taxonomy" id="99287"/>
    <lineage>
        <taxon>Bacteria</taxon>
        <taxon>Pseudomonadati</taxon>
        <taxon>Pseudomonadota</taxon>
        <taxon>Gammaproteobacteria</taxon>
        <taxon>Enterobacterales</taxon>
        <taxon>Enterobacteriaceae</taxon>
        <taxon>Salmonella</taxon>
    </lineage>
</organism>
<keyword id="KW-1185">Reference proteome</keyword>
<keyword id="KW-0687">Ribonucleoprotein</keyword>
<keyword id="KW-0689">Ribosomal protein</keyword>
<evidence type="ECO:0000250" key="1"/>
<evidence type="ECO:0000255" key="2">
    <source>
        <dbReference type="HAMAP-Rule" id="MF_00532"/>
    </source>
</evidence>
<evidence type="ECO:0000305" key="3"/>